<proteinExistence type="evidence at protein level"/>
<comment type="function">
    <text evidence="4">Has no hyaluronidase activity.</text>
</comment>
<comment type="subcellular location">
    <subcellularLocation>
        <location evidence="3">Secreted</location>
    </subcellularLocation>
</comment>
<comment type="tissue specificity">
    <text evidence="3">Expressed by the venom gland.</text>
</comment>
<comment type="PTM">
    <text evidence="3">N-glycosylated on at least two Asn residues by identical heptasaccharide units composed of Man, GlcNAc, and Fuc residues in the molar ration of 3:2:2.</text>
</comment>
<comment type="allergen">
    <text evidence="5">Causes an allergic reaction in human.</text>
</comment>
<comment type="similarity">
    <text evidence="2">Belongs to the glycosyl hydrolase 56 family.</text>
</comment>
<comment type="caution">
    <text evidence="5">Lacks the typical Glu active site in position 111 that is replaced by a His residue, preventing the hyaluronidase activity.</text>
</comment>
<reference evidence="5 6" key="1">
    <citation type="journal article" date="2005" name="FEBS J.">
        <title>The N-glycans of yellow jacket venom hyaluronidases and the protein sequence of its major isoform in Vespula vulgaris.</title>
        <authorList>
            <person name="Kolarich D."/>
            <person name="Leonard R."/>
            <person name="Hemmer W."/>
            <person name="Altmann F."/>
        </authorList>
    </citation>
    <scope>NUCLEOTIDE SEQUENCE [MRNA]</scope>
    <scope>PROTEIN SEQUENCE OF 1-15; 53-59; 92-99; 129-136; 228-242; 259-281 AND 320-327</scope>
    <scope>SUBCELLULAR LOCATION</scope>
    <scope>TISSUE SPECIFICITY</scope>
    <scope>GLYCOSYLATION AT ASN-66 AND ASN-81</scope>
    <source>
        <tissue evidence="3">Venom</tissue>
        <tissue evidence="3">Venom gland</tissue>
    </source>
</reference>
<reference key="2">
    <citation type="journal article" date="2010" name="Mol. Immunol.">
        <title>Dissecting cross-reactivity in hymenoptera venom allergy by circumvention of alpha-1,3-core fucosylation.</title>
        <authorList>
            <person name="Seismann H."/>
            <person name="Blank S."/>
            <person name="Braren I."/>
            <person name="Greunke K."/>
            <person name="Cifuentes L."/>
            <person name="Grunwald T."/>
            <person name="Bredehorst R."/>
            <person name="Ollert M."/>
            <person name="Spillner E."/>
        </authorList>
    </citation>
    <scope>FUNCTION</scope>
</reference>
<accession>Q5D7H4</accession>
<dbReference type="EMBL" id="AY845866">
    <property type="protein sequence ID" value="AAX14718.1"/>
    <property type="molecule type" value="mRNA"/>
</dbReference>
<dbReference type="EMBL" id="AJ920395">
    <property type="protein sequence ID" value="CAI77218.1"/>
    <property type="molecule type" value="mRNA"/>
</dbReference>
<dbReference type="SMR" id="Q5D7H4"/>
<dbReference type="Allergome" id="3522">
    <property type="allergen name" value="Ves v 2.0201"/>
</dbReference>
<dbReference type="Allergome" id="669">
    <property type="allergen name" value="Ves v 2"/>
</dbReference>
<dbReference type="CAZy" id="GH56">
    <property type="family name" value="Glycoside Hydrolase Family 56"/>
</dbReference>
<dbReference type="iPTMnet" id="Q5D7H4"/>
<dbReference type="GO" id="GO:0005576">
    <property type="term" value="C:extracellular region"/>
    <property type="evidence" value="ECO:0000314"/>
    <property type="project" value="UniProtKB"/>
</dbReference>
<dbReference type="GO" id="GO:0004415">
    <property type="term" value="F:hyalurononglucosaminidase activity"/>
    <property type="evidence" value="ECO:0007669"/>
    <property type="project" value="InterPro"/>
</dbReference>
<dbReference type="GO" id="GO:0005975">
    <property type="term" value="P:carbohydrate metabolic process"/>
    <property type="evidence" value="ECO:0007669"/>
    <property type="project" value="InterPro"/>
</dbReference>
<dbReference type="GO" id="GO:0006952">
    <property type="term" value="P:defense response"/>
    <property type="evidence" value="ECO:0007669"/>
    <property type="project" value="InterPro"/>
</dbReference>
<dbReference type="GO" id="GO:0030214">
    <property type="term" value="P:hyaluronan catabolic process"/>
    <property type="evidence" value="ECO:0007669"/>
    <property type="project" value="TreeGrafter"/>
</dbReference>
<dbReference type="FunFam" id="3.20.20.70:FF:000366">
    <property type="entry name" value="Hyaluronidase"/>
    <property type="match status" value="1"/>
</dbReference>
<dbReference type="Gene3D" id="3.20.20.70">
    <property type="entry name" value="Aldolase class I"/>
    <property type="match status" value="1"/>
</dbReference>
<dbReference type="InterPro" id="IPR013785">
    <property type="entry name" value="Aldolase_TIM"/>
</dbReference>
<dbReference type="InterPro" id="IPR017853">
    <property type="entry name" value="Glycoside_hydrolase_SF"/>
</dbReference>
<dbReference type="InterPro" id="IPR018155">
    <property type="entry name" value="Hyaluronidase"/>
</dbReference>
<dbReference type="InterPro" id="IPR001329">
    <property type="entry name" value="Venom_Hyaluronidase"/>
</dbReference>
<dbReference type="PANTHER" id="PTHR11769">
    <property type="entry name" value="HYALURONIDASE"/>
    <property type="match status" value="1"/>
</dbReference>
<dbReference type="PANTHER" id="PTHR11769:SF35">
    <property type="entry name" value="HYALURONIDASE"/>
    <property type="match status" value="1"/>
</dbReference>
<dbReference type="Pfam" id="PF01630">
    <property type="entry name" value="Glyco_hydro_56"/>
    <property type="match status" value="1"/>
</dbReference>
<dbReference type="PIRSF" id="PIRSF038193">
    <property type="entry name" value="Hyaluronidase"/>
    <property type="match status" value="1"/>
</dbReference>
<dbReference type="PRINTS" id="PR00846">
    <property type="entry name" value="GLHYDRLASE56"/>
</dbReference>
<dbReference type="PRINTS" id="PR00847">
    <property type="entry name" value="HYALURONDASE"/>
</dbReference>
<dbReference type="SUPFAM" id="SSF51445">
    <property type="entry name" value="(Trans)glycosidases"/>
    <property type="match status" value="1"/>
</dbReference>
<organism>
    <name type="scientific">Vespula vulgaris</name>
    <name type="common">Yellow jacket</name>
    <name type="synonym">Wasp</name>
    <dbReference type="NCBI Taxonomy" id="7454"/>
    <lineage>
        <taxon>Eukaryota</taxon>
        <taxon>Metazoa</taxon>
        <taxon>Ecdysozoa</taxon>
        <taxon>Arthropoda</taxon>
        <taxon>Hexapoda</taxon>
        <taxon>Insecta</taxon>
        <taxon>Pterygota</taxon>
        <taxon>Neoptera</taxon>
        <taxon>Endopterygota</taxon>
        <taxon>Hymenoptera</taxon>
        <taxon>Apocrita</taxon>
        <taxon>Aculeata</taxon>
        <taxon>Vespoidea</taxon>
        <taxon>Vespidae</taxon>
        <taxon>Vespinae</taxon>
        <taxon>Vespula</taxon>
    </lineage>
</organism>
<keyword id="KW-0020">Allergen</keyword>
<keyword id="KW-0903">Direct protein sequencing</keyword>
<keyword id="KW-1015">Disulfide bond</keyword>
<keyword id="KW-0325">Glycoprotein</keyword>
<keyword id="KW-0964">Secreted</keyword>
<name>HUGAB_VESVU</name>
<feature type="chain" id="PRO_0000271764" description="Inactive hyaluronidase B">
    <location>
        <begin position="1"/>
        <end position="340"/>
    </location>
</feature>
<feature type="glycosylation site" description="N-linked (GlcNAc...) asparagine" evidence="3">
    <location>
        <position position="66"/>
    </location>
</feature>
<feature type="glycosylation site" description="N-linked (GlcNAc...) asparagine" evidence="3">
    <location>
        <position position="81"/>
    </location>
</feature>
<feature type="disulfide bond" evidence="1">
    <location>
        <begin position="21"/>
        <end position="310"/>
    </location>
</feature>
<feature type="disulfide bond" evidence="1">
    <location>
        <begin position="187"/>
        <end position="199"/>
    </location>
</feature>
<feature type="sequence conflict" description="In Ref. 1; AA sequence." evidence="5" ref="1">
    <original>F</original>
    <variation>S</variation>
    <location>
        <position position="10"/>
    </location>
</feature>
<feature type="sequence conflict" description="In Ref. 1; AA sequence." evidence="5" ref="1">
    <original>I</original>
    <variation>L</variation>
    <location>
        <position position="273"/>
    </location>
</feature>
<protein>
    <recommendedName>
        <fullName>Inactive hyaluronidase B</fullName>
        <shortName>Hya B</shortName>
    </recommendedName>
    <alternativeName>
        <fullName>Hyaluronoglucosaminidase B</fullName>
    </alternativeName>
    <allergenName>Ves v 2b</allergenName>
</protein>
<sequence>DRTIWPKKGFSIYWNIPTHFCHNFGVYFKELKQFNIKYNSMNNFRGETISLFYDPGNFPSMVLLKNGTYEIRNEGVPQKGNLTIHLEQFTKELDEIYPKKIAGGIGVIHFHNWRPIFRRNVDNLKINKDISIDLVRKEHPKWDKSMIEKEASNRFETSAKIFMEKTLKLAKEIRKKTEWGYHGYPHCLSGSTDKPSFDCDALSMSENDKMSWLFNNQNVLLPSIYLKNVLKPDEKIHLVQERLKEAIRISKNFKHLPKVLPYWWYTYQDKESIFLTEADVKNTFKEILTNGADGIIIWGVSYELTDRKRCEKLKEYLMKILGPIAFKVTKAVKENTPLNF</sequence>
<evidence type="ECO:0000250" key="1">
    <source>
        <dbReference type="UniProtKB" id="Q08169"/>
    </source>
</evidence>
<evidence type="ECO:0000255" key="2"/>
<evidence type="ECO:0000269" key="3">
    <source>
    </source>
</evidence>
<evidence type="ECO:0000269" key="4">
    <source>
    </source>
</evidence>
<evidence type="ECO:0000305" key="5"/>
<evidence type="ECO:0000312" key="6">
    <source>
        <dbReference type="EMBL" id="AAX14718.1"/>
    </source>
</evidence>